<gene>
    <name evidence="8" type="primary">BICRA</name>
    <name evidence="8" type="synonym">GLTSCR1</name>
</gene>
<dbReference type="EMBL" id="AF182077">
    <property type="protein sequence ID" value="AAF62874.1"/>
    <property type="status" value="ALT_INIT"/>
    <property type="molecule type" value="mRNA"/>
</dbReference>
<dbReference type="EMBL" id="AC008985">
    <property type="status" value="NOT_ANNOTATED_CDS"/>
    <property type="molecule type" value="Genomic_DNA"/>
</dbReference>
<dbReference type="EMBL" id="AC010519">
    <property type="status" value="NOT_ANNOTATED_CDS"/>
    <property type="molecule type" value="Genomic_DNA"/>
</dbReference>
<dbReference type="EMBL" id="CH471126">
    <property type="protein sequence ID" value="EAW57504.1"/>
    <property type="molecule type" value="Genomic_DNA"/>
</dbReference>
<dbReference type="EMBL" id="BC032065">
    <property type="status" value="NOT_ANNOTATED_CDS"/>
    <property type="molecule type" value="mRNA"/>
</dbReference>
<dbReference type="CCDS" id="CCDS46134.1">
    <molecule id="Q9NZM4-1"/>
</dbReference>
<dbReference type="RefSeq" id="NP_001381301.1">
    <molecule id="Q9NZM4-1"/>
    <property type="nucleotide sequence ID" value="NM_001394372.1"/>
</dbReference>
<dbReference type="RefSeq" id="NP_056526.3">
    <molecule id="Q9NZM4-1"/>
    <property type="nucleotide sequence ID" value="NM_015711.3"/>
</dbReference>
<dbReference type="RefSeq" id="XP_005258890.1">
    <property type="nucleotide sequence ID" value="XM_005258833.4"/>
</dbReference>
<dbReference type="BioGRID" id="119022">
    <property type="interactions" value="69"/>
</dbReference>
<dbReference type="ComplexPortal" id="CPX-4084">
    <property type="entry name" value="GBAF (SWI/SNF) ATP-dependent chromatin remodeling complex, ACTL6A-BICRA-SMARCA2 variant"/>
</dbReference>
<dbReference type="ComplexPortal" id="CPX-4206">
    <property type="entry name" value="GBAF (SWI/SNF) ATP-dependent chromatin remodeling complex, ACTL6A-BICRA-SMARCA4 variant"/>
</dbReference>
<dbReference type="ComplexPortal" id="CPX-4223">
    <property type="entry name" value="GBAF (SWI/SNF) ATP-dependent chromatin remodeling complex, ACTL6B-BICRA-SMARCA2 variant"/>
</dbReference>
<dbReference type="ComplexPortal" id="CPX-4225">
    <property type="entry name" value="GBAF (SWI/SNF) ATP-dependent chromatin remodeling complex, ACTL6B-BICRA-SMARCA4 variant"/>
</dbReference>
<dbReference type="FunCoup" id="Q9NZM4">
    <property type="interactions" value="1259"/>
</dbReference>
<dbReference type="IntAct" id="Q9NZM4">
    <property type="interactions" value="41"/>
</dbReference>
<dbReference type="MINT" id="Q9NZM4"/>
<dbReference type="STRING" id="9606.ENSP00000379946"/>
<dbReference type="GlyCosmos" id="Q9NZM4">
    <property type="glycosylation" value="3 sites, 2 glycans"/>
</dbReference>
<dbReference type="GlyGen" id="Q9NZM4">
    <property type="glycosylation" value="16 sites, 2 O-linked glycans (7 sites)"/>
</dbReference>
<dbReference type="iPTMnet" id="Q9NZM4"/>
<dbReference type="PhosphoSitePlus" id="Q9NZM4"/>
<dbReference type="BioMuta" id="BICRA"/>
<dbReference type="DMDM" id="215273990"/>
<dbReference type="jPOST" id="Q9NZM4"/>
<dbReference type="MassIVE" id="Q9NZM4"/>
<dbReference type="PaxDb" id="9606-ENSP00000379946"/>
<dbReference type="PeptideAtlas" id="Q9NZM4"/>
<dbReference type="ProteomicsDB" id="83449">
    <molecule id="Q9NZM4-1"/>
</dbReference>
<dbReference type="ProteomicsDB" id="83450">
    <molecule id="Q9NZM4-2"/>
</dbReference>
<dbReference type="Pumba" id="Q9NZM4"/>
<dbReference type="Antibodypedia" id="65070">
    <property type="antibodies" value="78 antibodies from 17 providers"/>
</dbReference>
<dbReference type="DNASU" id="29998"/>
<dbReference type="Ensembl" id="ENST00000396720.7">
    <molecule id="Q9NZM4-1"/>
    <property type="protein sequence ID" value="ENSP00000379946.2"/>
    <property type="gene ID" value="ENSG00000063169.12"/>
</dbReference>
<dbReference type="Ensembl" id="ENST00000594866.3">
    <molecule id="Q9NZM4-1"/>
    <property type="protein sequence ID" value="ENSP00000469738.2"/>
    <property type="gene ID" value="ENSG00000063169.12"/>
</dbReference>
<dbReference type="Ensembl" id="ENST00000614245.2">
    <molecule id="Q9NZM4-2"/>
    <property type="protein sequence ID" value="ENSP00000480219.2"/>
    <property type="gene ID" value="ENSG00000063169.12"/>
</dbReference>
<dbReference type="GeneID" id="29998"/>
<dbReference type="KEGG" id="hsa:29998"/>
<dbReference type="MANE-Select" id="ENST00000594866.3">
    <property type="protein sequence ID" value="ENSP00000469738.2"/>
    <property type="RefSeq nucleotide sequence ID" value="NM_001394372.1"/>
    <property type="RefSeq protein sequence ID" value="NP_001381301.1"/>
</dbReference>
<dbReference type="UCSC" id="uc002phh.4">
    <molecule id="Q9NZM4-1"/>
    <property type="organism name" value="human"/>
</dbReference>
<dbReference type="AGR" id="HGNC:4332"/>
<dbReference type="CTD" id="29998"/>
<dbReference type="DisGeNET" id="29998"/>
<dbReference type="GeneCards" id="BICRA"/>
<dbReference type="HGNC" id="HGNC:4332">
    <property type="gene designation" value="BICRA"/>
</dbReference>
<dbReference type="HPA" id="ENSG00000063169">
    <property type="expression patterns" value="Low tissue specificity"/>
</dbReference>
<dbReference type="MalaCards" id="BICRA"/>
<dbReference type="MIM" id="605690">
    <property type="type" value="gene"/>
</dbReference>
<dbReference type="MIM" id="619325">
    <property type="type" value="phenotype"/>
</dbReference>
<dbReference type="neXtProt" id="NX_Q9NZM4"/>
<dbReference type="OpenTargets" id="ENSG00000063169"/>
<dbReference type="PharmGKB" id="PA28735"/>
<dbReference type="VEuPathDB" id="HostDB:ENSG00000063169"/>
<dbReference type="eggNOG" id="ENOG502QU2K">
    <property type="taxonomic scope" value="Eukaryota"/>
</dbReference>
<dbReference type="GeneTree" id="ENSGT00940000159112"/>
<dbReference type="HOGENOM" id="CLU_002283_0_0_1"/>
<dbReference type="InParanoid" id="Q9NZM4"/>
<dbReference type="OMA" id="FERVSCQ"/>
<dbReference type="OrthoDB" id="2556847at2759"/>
<dbReference type="PAN-GO" id="Q9NZM4">
    <property type="GO annotations" value="2 GO annotations based on evolutionary models"/>
</dbReference>
<dbReference type="PhylomeDB" id="Q9NZM4"/>
<dbReference type="TreeFam" id="TF335495"/>
<dbReference type="PathwayCommons" id="Q9NZM4"/>
<dbReference type="SignaLink" id="Q9NZM4"/>
<dbReference type="SIGNOR" id="Q9NZM4"/>
<dbReference type="BioGRID-ORCS" id="29998">
    <property type="hits" value="31 hits in 1166 CRISPR screens"/>
</dbReference>
<dbReference type="ChiTaRS" id="BICRA">
    <property type="organism name" value="human"/>
</dbReference>
<dbReference type="GenomeRNAi" id="29998"/>
<dbReference type="Pharos" id="Q9NZM4">
    <property type="development level" value="Tbio"/>
</dbReference>
<dbReference type="PRO" id="PR:Q9NZM4"/>
<dbReference type="Proteomes" id="UP000005640">
    <property type="component" value="Chromosome 19"/>
</dbReference>
<dbReference type="RNAct" id="Q9NZM4">
    <property type="molecule type" value="protein"/>
</dbReference>
<dbReference type="Bgee" id="ENSG00000063169">
    <property type="expression patterns" value="Expressed in oocyte and 198 other cell types or tissues"/>
</dbReference>
<dbReference type="ExpressionAtlas" id="Q9NZM4">
    <property type="expression patterns" value="baseline and differential"/>
</dbReference>
<dbReference type="GO" id="GO:0000785">
    <property type="term" value="C:chromatin"/>
    <property type="evidence" value="ECO:0000303"/>
    <property type="project" value="ComplexPortal"/>
</dbReference>
<dbReference type="GO" id="GO:0140288">
    <property type="term" value="C:GBAF complex"/>
    <property type="evidence" value="ECO:0000303"/>
    <property type="project" value="ComplexPortal"/>
</dbReference>
<dbReference type="GO" id="GO:0005634">
    <property type="term" value="C:nucleus"/>
    <property type="evidence" value="ECO:0000315"/>
    <property type="project" value="UniProtKB"/>
</dbReference>
<dbReference type="GO" id="GO:0016514">
    <property type="term" value="C:SWI/SNF complex"/>
    <property type="evidence" value="ECO:0000314"/>
    <property type="project" value="UniProtKB"/>
</dbReference>
<dbReference type="GO" id="GO:0140537">
    <property type="term" value="F:transcription regulator activator activity"/>
    <property type="evidence" value="ECO:0000315"/>
    <property type="project" value="UniProtKB"/>
</dbReference>
<dbReference type="GO" id="GO:0006338">
    <property type="term" value="P:chromatin remodeling"/>
    <property type="evidence" value="ECO:0000303"/>
    <property type="project" value="ComplexPortal"/>
</dbReference>
<dbReference type="GO" id="GO:0045596">
    <property type="term" value="P:negative regulation of cell differentiation"/>
    <property type="evidence" value="ECO:0000303"/>
    <property type="project" value="ComplexPortal"/>
</dbReference>
<dbReference type="GO" id="GO:0008284">
    <property type="term" value="P:positive regulation of cell population proliferation"/>
    <property type="evidence" value="ECO:0000303"/>
    <property type="project" value="ComplexPortal"/>
</dbReference>
<dbReference type="GO" id="GO:0045893">
    <property type="term" value="P:positive regulation of DNA-templated transcription"/>
    <property type="evidence" value="ECO:0000315"/>
    <property type="project" value="UniProtKB"/>
</dbReference>
<dbReference type="GO" id="GO:1902459">
    <property type="term" value="P:positive regulation of stem cell population maintenance"/>
    <property type="evidence" value="ECO:0000303"/>
    <property type="project" value="ComplexPortal"/>
</dbReference>
<dbReference type="GO" id="GO:0006357">
    <property type="term" value="P:regulation of transcription by RNA polymerase II"/>
    <property type="evidence" value="ECO:0000303"/>
    <property type="project" value="ComplexPortal"/>
</dbReference>
<dbReference type="InterPro" id="IPR052438">
    <property type="entry name" value="Chromatin_remod/trans_coact"/>
</dbReference>
<dbReference type="InterPro" id="IPR015671">
    <property type="entry name" value="GSCR1_dom"/>
</dbReference>
<dbReference type="PANTHER" id="PTHR15572:SF1">
    <property type="entry name" value="BRD4-INTERACTING CHROMATIN-REMODELING COMPLEX-ASSOCIATED PROTEIN"/>
    <property type="match status" value="1"/>
</dbReference>
<dbReference type="PANTHER" id="PTHR15572">
    <property type="entry name" value="GLIOMA TUMOR SUPPRESSOR CANDIDATE REGION GENE 1"/>
    <property type="match status" value="1"/>
</dbReference>
<dbReference type="Pfam" id="PF15249">
    <property type="entry name" value="GLTSCR1"/>
    <property type="match status" value="1"/>
</dbReference>
<comment type="function">
    <text evidence="3 4">Component of SWI/SNF chromatin remodeling subcomplex GBAF that carries out key enzymatic activities, changing chromatin structure by altering DNA-histone contacts within a nucleosome in an ATP-dependent manner (PubMed:29374058). May play a role in BRD4-mediated gene transcription (PubMed:21555454).</text>
</comment>
<comment type="subunit">
    <text evidence="3 4">Component of the multiprotein chromatin-remodeling complexes SWI/SNF: SWI/SNF-A (BAF), SWI/SNF-B (PBAF) and related complexes. The canonical complex contains a catalytic subunit (either SMARCA4/BRG1/BAF190A or SMARCA2/BRM/BAF190B) and at least SMARCE1, ACTL6A/BAF53, SMARCC1/BAF155, SMARCC2/BAF170, and SMARCB1/SNF5/BAF47. Other subunits specific to each of the complexes may also be present permitting several possible combinations developmentally and tissue specific. Component of the SWI/SNF (GBAF) subcomplex, which includes at least BICRA or BICRAL (mutually exclusive), BRD9, SS18, the core BAF subunits, SMARCA2/BRM, SMARCA4/BRG1/BAF190A, ACTL6A/BAF53, SMARCC1/BAF155, and SMARCD1/BAF60A (PubMed:29374058). Interacts with BRD4; the interaction bridges BRD4 to the GBAF complex (PubMed:21555454, PubMed:29374058).</text>
</comment>
<comment type="interaction">
    <interactant intactId="EBI-1754943">
        <id>Q9NZM4</id>
    </interactant>
    <interactant intactId="EBI-886">
        <id>P46108</id>
        <label>CRK</label>
    </interactant>
    <organismsDiffer>false</organismsDiffer>
    <experiments>2</experiments>
</comment>
<comment type="interaction">
    <interactant intactId="EBI-1754943">
        <id>Q9NZM4</id>
    </interactant>
    <interactant intactId="EBI-389883">
        <id>P16333</id>
        <label>NCK1</label>
    </interactant>
    <organismsDiffer>false</organismsDiffer>
    <experiments>3</experiments>
</comment>
<comment type="subcellular location">
    <subcellularLocation>
        <location evidence="3">Nucleus</location>
    </subcellularLocation>
</comment>
<comment type="alternative products">
    <event type="alternative splicing"/>
    <isoform>
        <id>Q9NZM4-1</id>
        <name>1</name>
        <sequence type="displayed"/>
    </isoform>
    <isoform>
        <id>Q9NZM4-2</id>
        <name>2</name>
        <sequence type="described" ref="VSP_035776"/>
    </isoform>
</comment>
<comment type="tissue specificity">
    <text evidence="2">Expressed at moderate levels in heart, brain, placenta, skeletal muscle, and pancreas, and at lower levels in lung, liver and kidney.</text>
</comment>
<comment type="disease" evidence="5">
    <disease id="DI-06109">
        <name>Coffin-Siris syndrome 12</name>
        <acronym>CSS12</acronym>
        <description>A form of Coffin-Siris syndrome, a congenital multiple malformation syndrome with broad phenotypic and genetic variability. Cardinal features are intellectual disability, coarse facial features, hypertrichosis, and hypoplastic or absent fifth digit nails or phalanges. Additional features include malformations of the cardiac, gastrointestinal, genitourinary, and/or central nervous systems. Sucking/feeding difficulties, poor growth, ophthalmologic abnormalities, hearing impairment, and spinal anomalies are common findings. CSS12 is an autosomal dominant form characterized by global developmental delay with variably impaired intellectual development, speech and language delay, and behavioral abnormalities, such as autism or hyperactivity. Most CSS12 patients do not have the classic hypoplastic fifth digit/nail abnormalities that are often observed in other forms the disease.</description>
        <dbReference type="MIM" id="619325"/>
    </disease>
    <text>The disease is caused by variants affecting the gene represented in this entry.</text>
</comment>
<comment type="sequence caution" evidence="7">
    <conflict type="erroneous initiation">
        <sequence resource="EMBL-CDS" id="AAF62874"/>
    </conflict>
    <text>Extended N-terminus.</text>
</comment>
<evidence type="ECO:0000256" key="1">
    <source>
        <dbReference type="SAM" id="MobiDB-lite"/>
    </source>
</evidence>
<evidence type="ECO:0000269" key="2">
    <source>
    </source>
</evidence>
<evidence type="ECO:0000269" key="3">
    <source>
    </source>
</evidence>
<evidence type="ECO:0000269" key="4">
    <source>
    </source>
</evidence>
<evidence type="ECO:0000269" key="5">
    <source>
    </source>
</evidence>
<evidence type="ECO:0000303" key="6">
    <source>
    </source>
</evidence>
<evidence type="ECO:0000305" key="7"/>
<evidence type="ECO:0000312" key="8">
    <source>
        <dbReference type="HGNC" id="HGNC:4332"/>
    </source>
</evidence>
<evidence type="ECO:0007744" key="9">
    <source>
    </source>
</evidence>
<evidence type="ECO:0007744" key="10">
    <source>
    </source>
</evidence>
<evidence type="ECO:0007744" key="11">
    <source>
    </source>
</evidence>
<evidence type="ECO:0007744" key="12">
    <source>
    </source>
</evidence>
<feature type="chain" id="PRO_0000083864" description="BRD4-interacting chromatin-remodeling complex-associated protein">
    <location>
        <begin position="1"/>
        <end position="1560"/>
    </location>
</feature>
<feature type="region of interest" description="Disordered" evidence="1">
    <location>
        <begin position="53"/>
        <end position="99"/>
    </location>
</feature>
<feature type="region of interest" description="Disordered" evidence="1">
    <location>
        <begin position="624"/>
        <end position="688"/>
    </location>
</feature>
<feature type="region of interest" description="Disordered" evidence="1">
    <location>
        <begin position="723"/>
        <end position="949"/>
    </location>
</feature>
<feature type="region of interest" description="Disordered" evidence="1">
    <location>
        <begin position="974"/>
        <end position="1028"/>
    </location>
</feature>
<feature type="region of interest" description="Disordered" evidence="1">
    <location>
        <begin position="1049"/>
        <end position="1075"/>
    </location>
</feature>
<feature type="region of interest" description="Disordered" evidence="1">
    <location>
        <begin position="1215"/>
        <end position="1300"/>
    </location>
</feature>
<feature type="region of interest" description="Disordered" evidence="1">
    <location>
        <begin position="1324"/>
        <end position="1424"/>
    </location>
</feature>
<feature type="region of interest" description="Disordered" evidence="1">
    <location>
        <begin position="1440"/>
        <end position="1560"/>
    </location>
</feature>
<feature type="compositionally biased region" description="Gly residues" evidence="1">
    <location>
        <begin position="86"/>
        <end position="96"/>
    </location>
</feature>
<feature type="compositionally biased region" description="Low complexity" evidence="1">
    <location>
        <begin position="624"/>
        <end position="664"/>
    </location>
</feature>
<feature type="compositionally biased region" description="Pro residues" evidence="1">
    <location>
        <begin position="726"/>
        <end position="736"/>
    </location>
</feature>
<feature type="compositionally biased region" description="Low complexity" evidence="1">
    <location>
        <begin position="747"/>
        <end position="780"/>
    </location>
</feature>
<feature type="compositionally biased region" description="Pro residues" evidence="1">
    <location>
        <begin position="791"/>
        <end position="806"/>
    </location>
</feature>
<feature type="compositionally biased region" description="Pro residues" evidence="1">
    <location>
        <begin position="814"/>
        <end position="831"/>
    </location>
</feature>
<feature type="compositionally biased region" description="Pro residues" evidence="1">
    <location>
        <begin position="843"/>
        <end position="880"/>
    </location>
</feature>
<feature type="compositionally biased region" description="Low complexity" evidence="1">
    <location>
        <begin position="881"/>
        <end position="896"/>
    </location>
</feature>
<feature type="compositionally biased region" description="Pro residues" evidence="1">
    <location>
        <begin position="932"/>
        <end position="941"/>
    </location>
</feature>
<feature type="compositionally biased region" description="Low complexity" evidence="1">
    <location>
        <begin position="1005"/>
        <end position="1028"/>
    </location>
</feature>
<feature type="compositionally biased region" description="Polar residues" evidence="1">
    <location>
        <begin position="1227"/>
        <end position="1236"/>
    </location>
</feature>
<feature type="compositionally biased region" description="Low complexity" evidence="1">
    <location>
        <begin position="1264"/>
        <end position="1281"/>
    </location>
</feature>
<feature type="compositionally biased region" description="Pro residues" evidence="1">
    <location>
        <begin position="1331"/>
        <end position="1356"/>
    </location>
</feature>
<feature type="compositionally biased region" description="Low complexity" evidence="1">
    <location>
        <begin position="1401"/>
        <end position="1412"/>
    </location>
</feature>
<feature type="compositionally biased region" description="Polar residues" evidence="1">
    <location>
        <begin position="1485"/>
        <end position="1515"/>
    </location>
</feature>
<feature type="modified residue" description="Phosphoserine" evidence="11">
    <location>
        <position position="919"/>
    </location>
</feature>
<feature type="modified residue" description="Phosphothreonine" evidence="10">
    <location>
        <position position="921"/>
    </location>
</feature>
<feature type="modified residue" description="N6-acetyllysine" evidence="9">
    <location>
        <position position="1057"/>
    </location>
</feature>
<feature type="modified residue" description="Phosphoserine" evidence="10">
    <location>
        <position position="1413"/>
    </location>
</feature>
<feature type="cross-link" description="Glycyl lysine isopeptide (Lys-Gly) (interchain with G-Cter in SUMO2)" evidence="12">
    <location>
        <position position="1313"/>
    </location>
</feature>
<feature type="splice variant" id="VSP_035776" description="In isoform 2." evidence="6">
    <location>
        <begin position="1"/>
        <end position="242"/>
    </location>
</feature>
<feature type="sequence variant" id="VAR_085989" description="In CSS12; uncertain significance." evidence="5">
    <original>E</original>
    <variation>D</variation>
    <location>
        <position position="64"/>
    </location>
</feature>
<feature type="sequence variant" id="VAR_085990" description="In CSS12." evidence="5">
    <location>
        <begin position="665"/>
        <end position="1560"/>
    </location>
</feature>
<feature type="sequence variant" id="VAR_061663" description="In dbSNP:rs3745762.">
    <original>P</original>
    <variation>S</variation>
    <location>
        <position position="683"/>
    </location>
</feature>
<feature type="sequence variant" id="VAR_059665" description="In dbSNP:rs13346368.">
    <original>T</original>
    <variation>A</variation>
    <location>
        <position position="1044"/>
    </location>
</feature>
<feature type="sequence variant" id="VAR_085991" description="In CSS12; uncertain significance." evidence="5">
    <original>E</original>
    <variation>K</variation>
    <location>
        <position position="1423"/>
    </location>
</feature>
<feature type="sequence variant" id="VAR_085992" description="In CSS12." evidence="5">
    <location>
        <begin position="1457"/>
        <end position="1560"/>
    </location>
</feature>
<organism>
    <name type="scientific">Homo sapiens</name>
    <name type="common">Human</name>
    <dbReference type="NCBI Taxonomy" id="9606"/>
    <lineage>
        <taxon>Eukaryota</taxon>
        <taxon>Metazoa</taxon>
        <taxon>Chordata</taxon>
        <taxon>Craniata</taxon>
        <taxon>Vertebrata</taxon>
        <taxon>Euteleostomi</taxon>
        <taxon>Mammalia</taxon>
        <taxon>Eutheria</taxon>
        <taxon>Euarchontoglires</taxon>
        <taxon>Primates</taxon>
        <taxon>Haplorrhini</taxon>
        <taxon>Catarrhini</taxon>
        <taxon>Hominidae</taxon>
        <taxon>Homo</taxon>
    </lineage>
</organism>
<protein>
    <recommendedName>
        <fullName evidence="7">BRD4-interacting chromatin-remodeling complex-associated protein</fullName>
    </recommendedName>
    <alternativeName>
        <fullName evidence="8">Glioma tumor suppressor candidate region gene 1 protein</fullName>
    </alternativeName>
</protein>
<proteinExistence type="evidence at protein level"/>
<accession>Q9NZM4</accession>
<accession>A8MW01</accession>
<reference key="1">
    <citation type="journal article" date="2000" name="Genomics">
        <title>A transcript map of the chromosome 19q-Arm glioma tumor suppressor region.</title>
        <authorList>
            <person name="Smith J.S."/>
            <person name="Tachibana I."/>
            <person name="Pohl U."/>
            <person name="Lee H.K."/>
            <person name="Thanarajasingam U."/>
            <person name="Portier B.P."/>
            <person name="Ueki K."/>
            <person name="Billings S."/>
            <person name="Ramaswamy S."/>
            <person name="Mohrenweiser H.W."/>
            <person name="Scheithauer B.W."/>
            <person name="Louis D.N."/>
            <person name="Jenkins R.B."/>
        </authorList>
    </citation>
    <scope>NUCLEOTIDE SEQUENCE [MRNA] (ISOFORM 2)</scope>
    <scope>TISSUE SPECIFICITY</scope>
</reference>
<reference key="2">
    <citation type="journal article" date="2004" name="Nature">
        <title>The DNA sequence and biology of human chromosome 19.</title>
        <authorList>
            <person name="Grimwood J."/>
            <person name="Gordon L.A."/>
            <person name="Olsen A.S."/>
            <person name="Terry A."/>
            <person name="Schmutz J."/>
            <person name="Lamerdin J.E."/>
            <person name="Hellsten U."/>
            <person name="Goodstein D."/>
            <person name="Couronne O."/>
            <person name="Tran-Gyamfi M."/>
            <person name="Aerts A."/>
            <person name="Altherr M."/>
            <person name="Ashworth L."/>
            <person name="Bajorek E."/>
            <person name="Black S."/>
            <person name="Branscomb E."/>
            <person name="Caenepeel S."/>
            <person name="Carrano A.V."/>
            <person name="Caoile C."/>
            <person name="Chan Y.M."/>
            <person name="Christensen M."/>
            <person name="Cleland C.A."/>
            <person name="Copeland A."/>
            <person name="Dalin E."/>
            <person name="Dehal P."/>
            <person name="Denys M."/>
            <person name="Detter J.C."/>
            <person name="Escobar J."/>
            <person name="Flowers D."/>
            <person name="Fotopulos D."/>
            <person name="Garcia C."/>
            <person name="Georgescu A.M."/>
            <person name="Glavina T."/>
            <person name="Gomez M."/>
            <person name="Gonzales E."/>
            <person name="Groza M."/>
            <person name="Hammon N."/>
            <person name="Hawkins T."/>
            <person name="Haydu L."/>
            <person name="Ho I."/>
            <person name="Huang W."/>
            <person name="Israni S."/>
            <person name="Jett J."/>
            <person name="Kadner K."/>
            <person name="Kimball H."/>
            <person name="Kobayashi A."/>
            <person name="Larionov V."/>
            <person name="Leem S.-H."/>
            <person name="Lopez F."/>
            <person name="Lou Y."/>
            <person name="Lowry S."/>
            <person name="Malfatti S."/>
            <person name="Martinez D."/>
            <person name="McCready P.M."/>
            <person name="Medina C."/>
            <person name="Morgan J."/>
            <person name="Nelson K."/>
            <person name="Nolan M."/>
            <person name="Ovcharenko I."/>
            <person name="Pitluck S."/>
            <person name="Pollard M."/>
            <person name="Popkie A.P."/>
            <person name="Predki P."/>
            <person name="Quan G."/>
            <person name="Ramirez L."/>
            <person name="Rash S."/>
            <person name="Retterer J."/>
            <person name="Rodriguez A."/>
            <person name="Rogers S."/>
            <person name="Salamov A."/>
            <person name="Salazar A."/>
            <person name="She X."/>
            <person name="Smith D."/>
            <person name="Slezak T."/>
            <person name="Solovyev V."/>
            <person name="Thayer N."/>
            <person name="Tice H."/>
            <person name="Tsai M."/>
            <person name="Ustaszewska A."/>
            <person name="Vo N."/>
            <person name="Wagner M."/>
            <person name="Wheeler J."/>
            <person name="Wu K."/>
            <person name="Xie G."/>
            <person name="Yang J."/>
            <person name="Dubchak I."/>
            <person name="Furey T.S."/>
            <person name="DeJong P."/>
            <person name="Dickson M."/>
            <person name="Gordon D."/>
            <person name="Eichler E.E."/>
            <person name="Pennacchio L.A."/>
            <person name="Richardson P."/>
            <person name="Stubbs L."/>
            <person name="Rokhsar D.S."/>
            <person name="Myers R.M."/>
            <person name="Rubin E.M."/>
            <person name="Lucas S.M."/>
        </authorList>
    </citation>
    <scope>NUCLEOTIDE SEQUENCE [LARGE SCALE GENOMIC DNA]</scope>
</reference>
<reference key="3">
    <citation type="submission" date="2005-07" db="EMBL/GenBank/DDBJ databases">
        <authorList>
            <person name="Mural R.J."/>
            <person name="Istrail S."/>
            <person name="Sutton G.G."/>
            <person name="Florea L."/>
            <person name="Halpern A.L."/>
            <person name="Mobarry C.M."/>
            <person name="Lippert R."/>
            <person name="Walenz B."/>
            <person name="Shatkay H."/>
            <person name="Dew I."/>
            <person name="Miller J.R."/>
            <person name="Flanigan M.J."/>
            <person name="Edwards N.J."/>
            <person name="Bolanos R."/>
            <person name="Fasulo D."/>
            <person name="Halldorsson B.V."/>
            <person name="Hannenhalli S."/>
            <person name="Turner R."/>
            <person name="Yooseph S."/>
            <person name="Lu F."/>
            <person name="Nusskern D.R."/>
            <person name="Shue B.C."/>
            <person name="Zheng X.H."/>
            <person name="Zhong F."/>
            <person name="Delcher A.L."/>
            <person name="Huson D.H."/>
            <person name="Kravitz S.A."/>
            <person name="Mouchard L."/>
            <person name="Reinert K."/>
            <person name="Remington K.A."/>
            <person name="Clark A.G."/>
            <person name="Waterman M.S."/>
            <person name="Eichler E.E."/>
            <person name="Adams M.D."/>
            <person name="Hunkapiller M.W."/>
            <person name="Myers E.W."/>
            <person name="Venter J.C."/>
        </authorList>
    </citation>
    <scope>NUCLEOTIDE SEQUENCE [LARGE SCALE GENOMIC DNA]</scope>
</reference>
<reference key="4">
    <citation type="journal article" date="2004" name="Genome Res.">
        <title>The status, quality, and expansion of the NIH full-length cDNA project: the Mammalian Gene Collection (MGC).</title>
        <authorList>
            <consortium name="The MGC Project Team"/>
        </authorList>
    </citation>
    <scope>NUCLEOTIDE SEQUENCE [LARGE SCALE MRNA] OF 1-500 (ISOFORM 1)</scope>
    <source>
        <tissue>Brain</tissue>
    </source>
</reference>
<reference key="5">
    <citation type="journal article" date="2009" name="Science">
        <title>Lysine acetylation targets protein complexes and co-regulates major cellular functions.</title>
        <authorList>
            <person name="Choudhary C."/>
            <person name="Kumar C."/>
            <person name="Gnad F."/>
            <person name="Nielsen M.L."/>
            <person name="Rehman M."/>
            <person name="Walther T.C."/>
            <person name="Olsen J.V."/>
            <person name="Mann M."/>
        </authorList>
    </citation>
    <scope>ACETYLATION [LARGE SCALE ANALYSIS] AT LYS-1057</scope>
    <scope>IDENTIFICATION BY MASS SPECTROMETRY [LARGE SCALE ANALYSIS]</scope>
</reference>
<reference key="6">
    <citation type="journal article" date="2011" name="Mol. Cell. Biol.">
        <title>The Brd4 extraterminal domain confers transcription activation independent of pTEFb by recruiting multiple proteins, including NSD3.</title>
        <authorList>
            <person name="Rahman S."/>
            <person name="Sowa M.E."/>
            <person name="Ottinger M."/>
            <person name="Smith J.A."/>
            <person name="Shi Y."/>
            <person name="Harper J.W."/>
            <person name="Howley P.M."/>
        </authorList>
    </citation>
    <scope>FUNCTION</scope>
    <scope>INTERACTION WITH BRD4</scope>
    <scope>SUBCELLULAR LOCATION</scope>
</reference>
<reference key="7">
    <citation type="journal article" date="2013" name="J. Proteome Res.">
        <title>Toward a comprehensive characterization of a human cancer cell phosphoproteome.</title>
        <authorList>
            <person name="Zhou H."/>
            <person name="Di Palma S."/>
            <person name="Preisinger C."/>
            <person name="Peng M."/>
            <person name="Polat A.N."/>
            <person name="Heck A.J."/>
            <person name="Mohammed S."/>
        </authorList>
    </citation>
    <scope>PHOSPHORYLATION [LARGE SCALE ANALYSIS] AT THR-921 AND SER-1413</scope>
    <scope>IDENTIFICATION BY MASS SPECTROMETRY [LARGE SCALE ANALYSIS]</scope>
    <source>
        <tissue>Erythroleukemia</tissue>
    </source>
</reference>
<reference key="8">
    <citation type="journal article" date="2014" name="J. Proteomics">
        <title>An enzyme assisted RP-RPLC approach for in-depth analysis of human liver phosphoproteome.</title>
        <authorList>
            <person name="Bian Y."/>
            <person name="Song C."/>
            <person name="Cheng K."/>
            <person name="Dong M."/>
            <person name="Wang F."/>
            <person name="Huang J."/>
            <person name="Sun D."/>
            <person name="Wang L."/>
            <person name="Ye M."/>
            <person name="Zou H."/>
        </authorList>
    </citation>
    <scope>PHOSPHORYLATION [LARGE SCALE ANALYSIS] AT SER-919</scope>
    <scope>IDENTIFICATION BY MASS SPECTROMETRY [LARGE SCALE ANALYSIS]</scope>
    <source>
        <tissue>Liver</tissue>
    </source>
</reference>
<reference key="9">
    <citation type="journal article" date="2017" name="Nat. Struct. Mol. Biol.">
        <title>Site-specific mapping of the human SUMO proteome reveals co-modification with phosphorylation.</title>
        <authorList>
            <person name="Hendriks I.A."/>
            <person name="Lyon D."/>
            <person name="Young C."/>
            <person name="Jensen L.J."/>
            <person name="Vertegaal A.C."/>
            <person name="Nielsen M.L."/>
        </authorList>
    </citation>
    <scope>SUMOYLATION [LARGE SCALE ANALYSIS] AT LYS-1313</scope>
    <scope>IDENTIFICATION BY MASS SPECTROMETRY [LARGE SCALE ANALYSIS]</scope>
</reference>
<reference key="10">
    <citation type="journal article" date="2018" name="J. Biol. Chem.">
        <title>Glioma tumor suppressor candidate region gene 1 (GLTSCR1) and its paralog GLTSCR1-like form SWI/SNF chromatin remodeling subcomplexes.</title>
        <authorList>
            <person name="Alpsoy A."/>
            <person name="Dykhuizen E.C."/>
        </authorList>
    </citation>
    <scope>FUNCTION</scope>
    <scope>IDENTIFICATION IN THE GBAF COMPLEX</scope>
    <scope>INTERACTION WITH BRD4</scope>
</reference>
<reference key="11">
    <citation type="journal article" date="2020" name="Am. J. Hum. Genet.">
        <title>BICRA, a SWI/SNF Complex Member, Is Associated with BAF-Disorder Related Phenotypes in Humans and Model Organisms.</title>
        <authorList>
            <consortium name="Undiagnosed Diseases Network"/>
            <person name="Barish S."/>
            <person name="Barakat T.S."/>
            <person name="Michel B.C."/>
            <person name="Mashtalir N."/>
            <person name="Phillips J.B."/>
            <person name="Valencia A.M."/>
            <person name="Ugur B."/>
            <person name="Wegner J."/>
            <person name="Scott T.M."/>
            <person name="Bostwick B."/>
            <person name="Murdock D.R."/>
            <person name="Dai H."/>
            <person name="Perenthaler E."/>
            <person name="Nikoncuk A."/>
            <person name="van Slegtenhorst M."/>
            <person name="Brooks A.S."/>
            <person name="Keren B."/>
            <person name="Nava C."/>
            <person name="Mignot C."/>
            <person name="Douglas J."/>
            <person name="Rodan L."/>
            <person name="Nowak C."/>
            <person name="Ellard S."/>
            <person name="Stals K."/>
            <person name="Lynch S.A."/>
            <person name="Faoucher M."/>
            <person name="Lesca G."/>
            <person name="Edery P."/>
            <person name="Engleman K.L."/>
            <person name="Zhou D."/>
            <person name="Thiffault I."/>
            <person name="Herriges J."/>
            <person name="Gass J."/>
            <person name="Louie R.J."/>
            <person name="Stolerman E."/>
            <person name="Washington C."/>
            <person name="Vetrini F."/>
            <person name="Otsubo A."/>
            <person name="Pratt V.M."/>
            <person name="Conboy E."/>
            <person name="Treat K."/>
            <person name="Shannon N."/>
            <person name="Camacho J."/>
            <person name="Wakeling E."/>
            <person name="Yuan B."/>
            <person name="Chen C.A."/>
            <person name="Rosenfeld J.A."/>
            <person name="Westerfield M."/>
            <person name="Wangler M."/>
            <person name="Yamamoto S."/>
            <person name="Kadoch C."/>
            <person name="Scott D.A."/>
            <person name="Bellen H.J."/>
        </authorList>
    </citation>
    <scope>INVOLVEMENT IN CSS12</scope>
    <scope>VARIANTS CSS12 ASP-64; 665-GLN--ARG-1560 DEL; LYS-1423 AND 1457-GLN--ARG-1560 DEL</scope>
</reference>
<name>BICRA_HUMAN</name>
<keyword id="KW-0007">Acetylation</keyword>
<keyword id="KW-0025">Alternative splicing</keyword>
<keyword id="KW-0225">Disease variant</keyword>
<keyword id="KW-0991">Intellectual disability</keyword>
<keyword id="KW-1017">Isopeptide bond</keyword>
<keyword id="KW-0539">Nucleus</keyword>
<keyword id="KW-0597">Phosphoprotein</keyword>
<keyword id="KW-1267">Proteomics identification</keyword>
<keyword id="KW-1185">Reference proteome</keyword>
<keyword id="KW-0832">Ubl conjugation</keyword>
<sequence>MDDEDGRCLLDVICDPQALNDFLHGSEKLDSDDLLDNPGEAQSAFYEGPGLHVQEASGNHLNPEPNQPAPSVDLDFLEDDILGSPATGGGGGGSGGADQPCDILQQSLQEANITEQTLEAEAELDLGPFQLPTLQPADGGAGPTGAGGAAAVAAGPQALFPGSTDLLGLQGPPTVLTHQALVPPQDVVNKALSVQPFLQPVGLGNVTLQPIPGLQGLPNGSPGGATAATLGLAPIQVVGQPVMALNTPTSQLLAKQVPVSGYLASAAGPSEPVTLASAGVSPQGAGLVIQKNLSAAVATTLNGNSVFGGAGAASAPTGTPSGQPLAVAPGLGSSPLVPAPNVILHRTPTPIQPKPAGVLPPKLYQLTPKPFAPAGATLTIQGEPGALPQQPKAPQNLTFMAAGKAGQNVVLSGFPAPALQANVFKQPPATTTGAAPPQPPGALSKPMSVHLLNQGSSIVIPAQHMLPGQNQFLLPGAPAVQLPQQLSALPANVGGQILAAAAPHTGGQLIANPILTNQNLAGPLSLGPVLAPHSGAHSAHILSAAPIQVGQPALFQMPVSLAAGSLPTQSQPAPAGPAATTVLQGVTLPPSAVAMLNTPDGLVQPATPAAATGEAAPVLTVQPAPQAPPAVSTPLPLGLQQPQAQQPPQAPTPQAAAPPQATTPQPSPGLASSPEKIVLGQPPSATPTAILTQDSLQMFLPQERSQQPLSAEGPHLSVPASVIVSAPPPAQDPAPATPVAKGAGLGPQAPDSQASPAPAPQIPAAAPLKGPGPSSSPSLPHQAPLGDSPHLPSPHPTRPPSRPPSRPQSVSRPPSEPPLHPCPPPQAPPTLPGIFVIQNQLGVPPPASNPAPTAPGPPQPPLRPQSQPPEGPLPPAPHLPPSSTSSAVASSSETSSRLPAPTPSDFQLQFPPSQGPHKSPTPPPTLHLVPEPAAPPPPPPRTFQMVTTPFPALPQPKALLERFHQVPSGIILQNKAGGAPAAPQTSTSLGPLTSPAASVLVSGQAPSGTPTAPSHAPAPAPMAATGLPPLLPAENKAFASNLPTLNVAKAASSGPGKPSGLQYESKLSGLKKPPTLQPSKEACFLEHLHKHQGSVLHPDYKTAFPSFEDALHRLLPYHVYQGALPSPSDYHKVDEEFETVSTQLLKRTQAMLNKYRLLLLEESRRVSPSAEMVMIDRMFIQEEKTTLALDKQLAKEKPDEYVSSSRSLGLPIAASSEGHRLPGHGPLSSSAPGASTQPPPHLPTKLVIRHGGAGGSPSVTWARASSSLSSSSSSSSAASSLDADEDGPMPSRNRPPIKTYEARSRIGLKLKIKQEAGLSKVVHNTALDPVHQPPPPPATLKVAEPPPRPPPPPPPTGQMNGTVDHPPPAAPERKPLGTAPHCPRLPLRKTYRENVGGPGAPEGTPAGRARGGSPAPLPAKVDEATSGLIRELAAVEDELYQRMLKGPPPEPAASAAQGTGDPDWEAPGLPPAKRRKSESPDVDQASFSSDSPQDDTLTEHLQSAIDSILNLQQAPGRTPAPSYPHAASAGTPASPPPLHRPEAYPPSSHNGGLGARTLTR</sequence>